<feature type="chain" id="PRO_1000096553" description="Triosephosphate isomerase">
    <location>
        <begin position="1"/>
        <end position="255"/>
    </location>
</feature>
<feature type="active site" description="Electrophile" evidence="1">
    <location>
        <position position="95"/>
    </location>
</feature>
<feature type="active site" description="Proton acceptor" evidence="1">
    <location>
        <position position="167"/>
    </location>
</feature>
<feature type="binding site" evidence="1">
    <location>
        <begin position="9"/>
        <end position="11"/>
    </location>
    <ligand>
        <name>substrate</name>
    </ligand>
</feature>
<feature type="binding site" evidence="1">
    <location>
        <position position="173"/>
    </location>
    <ligand>
        <name>substrate</name>
    </ligand>
</feature>
<feature type="binding site" evidence="1">
    <location>
        <position position="212"/>
    </location>
    <ligand>
        <name>substrate</name>
    </ligand>
</feature>
<feature type="binding site" evidence="1">
    <location>
        <begin position="233"/>
        <end position="234"/>
    </location>
    <ligand>
        <name>substrate</name>
    </ligand>
</feature>
<protein>
    <recommendedName>
        <fullName evidence="1">Triosephosphate isomerase</fullName>
        <shortName evidence="1">TIM</shortName>
        <shortName evidence="1">TPI</shortName>
        <ecNumber evidence="1">5.3.1.1</ecNumber>
    </recommendedName>
    <alternativeName>
        <fullName evidence="1">Triose-phosphate isomerase</fullName>
    </alternativeName>
</protein>
<gene>
    <name evidence="1" type="primary">tpiA</name>
    <name type="ordered locus">YPTS_0085</name>
</gene>
<keyword id="KW-0963">Cytoplasm</keyword>
<keyword id="KW-0312">Gluconeogenesis</keyword>
<keyword id="KW-0324">Glycolysis</keyword>
<keyword id="KW-0413">Isomerase</keyword>
<name>TPIS_YERPB</name>
<dbReference type="EC" id="5.3.1.1" evidence="1"/>
<dbReference type="EMBL" id="CP001048">
    <property type="protein sequence ID" value="ACC87084.1"/>
    <property type="molecule type" value="Genomic_DNA"/>
</dbReference>
<dbReference type="RefSeq" id="WP_002208959.1">
    <property type="nucleotide sequence ID" value="NZ_CP009780.1"/>
</dbReference>
<dbReference type="SMR" id="B2JZB1"/>
<dbReference type="GeneID" id="57974507"/>
<dbReference type="KEGG" id="ypb:YPTS_0085"/>
<dbReference type="PATRIC" id="fig|502801.10.peg.3761"/>
<dbReference type="UniPathway" id="UPA00109">
    <property type="reaction ID" value="UER00189"/>
</dbReference>
<dbReference type="UniPathway" id="UPA00138"/>
<dbReference type="GO" id="GO:0005829">
    <property type="term" value="C:cytosol"/>
    <property type="evidence" value="ECO:0007669"/>
    <property type="project" value="TreeGrafter"/>
</dbReference>
<dbReference type="GO" id="GO:0004807">
    <property type="term" value="F:triose-phosphate isomerase activity"/>
    <property type="evidence" value="ECO:0007669"/>
    <property type="project" value="UniProtKB-UniRule"/>
</dbReference>
<dbReference type="GO" id="GO:0006094">
    <property type="term" value="P:gluconeogenesis"/>
    <property type="evidence" value="ECO:0007669"/>
    <property type="project" value="UniProtKB-UniRule"/>
</dbReference>
<dbReference type="GO" id="GO:0046166">
    <property type="term" value="P:glyceraldehyde-3-phosphate biosynthetic process"/>
    <property type="evidence" value="ECO:0007669"/>
    <property type="project" value="TreeGrafter"/>
</dbReference>
<dbReference type="GO" id="GO:0019563">
    <property type="term" value="P:glycerol catabolic process"/>
    <property type="evidence" value="ECO:0007669"/>
    <property type="project" value="TreeGrafter"/>
</dbReference>
<dbReference type="GO" id="GO:0006096">
    <property type="term" value="P:glycolytic process"/>
    <property type="evidence" value="ECO:0007669"/>
    <property type="project" value="UniProtKB-UniRule"/>
</dbReference>
<dbReference type="CDD" id="cd00311">
    <property type="entry name" value="TIM"/>
    <property type="match status" value="1"/>
</dbReference>
<dbReference type="FunFam" id="3.20.20.70:FF:000020">
    <property type="entry name" value="Triosephosphate isomerase"/>
    <property type="match status" value="1"/>
</dbReference>
<dbReference type="Gene3D" id="3.20.20.70">
    <property type="entry name" value="Aldolase class I"/>
    <property type="match status" value="1"/>
</dbReference>
<dbReference type="HAMAP" id="MF_00147_B">
    <property type="entry name" value="TIM_B"/>
    <property type="match status" value="1"/>
</dbReference>
<dbReference type="InterPro" id="IPR013785">
    <property type="entry name" value="Aldolase_TIM"/>
</dbReference>
<dbReference type="InterPro" id="IPR035990">
    <property type="entry name" value="TIM_sf"/>
</dbReference>
<dbReference type="InterPro" id="IPR022896">
    <property type="entry name" value="TrioseP_Isoase_bac/euk"/>
</dbReference>
<dbReference type="InterPro" id="IPR000652">
    <property type="entry name" value="Triosephosphate_isomerase"/>
</dbReference>
<dbReference type="InterPro" id="IPR020861">
    <property type="entry name" value="Triosephosphate_isomerase_AS"/>
</dbReference>
<dbReference type="NCBIfam" id="TIGR00419">
    <property type="entry name" value="tim"/>
    <property type="match status" value="1"/>
</dbReference>
<dbReference type="PANTHER" id="PTHR21139">
    <property type="entry name" value="TRIOSEPHOSPHATE ISOMERASE"/>
    <property type="match status" value="1"/>
</dbReference>
<dbReference type="PANTHER" id="PTHR21139:SF42">
    <property type="entry name" value="TRIOSEPHOSPHATE ISOMERASE"/>
    <property type="match status" value="1"/>
</dbReference>
<dbReference type="Pfam" id="PF00121">
    <property type="entry name" value="TIM"/>
    <property type="match status" value="1"/>
</dbReference>
<dbReference type="SUPFAM" id="SSF51351">
    <property type="entry name" value="Triosephosphate isomerase (TIM)"/>
    <property type="match status" value="1"/>
</dbReference>
<dbReference type="PROSITE" id="PS00171">
    <property type="entry name" value="TIM_1"/>
    <property type="match status" value="1"/>
</dbReference>
<dbReference type="PROSITE" id="PS51440">
    <property type="entry name" value="TIM_2"/>
    <property type="match status" value="1"/>
</dbReference>
<sequence>MRHPLVMGNWKLNGSTHMVNELIAGLRKELSTVDGCGVAIAPPAIYLNQAKHELAGSRIALGAQNVDVNLSGAFTGETSAEMLKDIGAQYIIIGHSERRTYHQESDELIAKKFGVLKEIGLIPVLCIGESEAENEAGQTEAVCAKQLDAVLNTLGVKAFEGAVIAYEPIWAIGTGKSATPAQAQAVHKFIRDHIAKQDAAVAAQVIIQYGGSVNDKNAAELFTQPDIDGALVGGASLKADAFAVIVKAAAKAKKA</sequence>
<accession>B2JZB1</accession>
<comment type="function">
    <text evidence="1">Involved in the gluconeogenesis. Catalyzes stereospecifically the conversion of dihydroxyacetone phosphate (DHAP) to D-glyceraldehyde-3-phosphate (G3P).</text>
</comment>
<comment type="catalytic activity">
    <reaction evidence="1">
        <text>D-glyceraldehyde 3-phosphate = dihydroxyacetone phosphate</text>
        <dbReference type="Rhea" id="RHEA:18585"/>
        <dbReference type="ChEBI" id="CHEBI:57642"/>
        <dbReference type="ChEBI" id="CHEBI:59776"/>
        <dbReference type="EC" id="5.3.1.1"/>
    </reaction>
</comment>
<comment type="pathway">
    <text evidence="1">Carbohydrate biosynthesis; gluconeogenesis.</text>
</comment>
<comment type="pathway">
    <text evidence="1">Carbohydrate degradation; glycolysis; D-glyceraldehyde 3-phosphate from glycerone phosphate: step 1/1.</text>
</comment>
<comment type="subunit">
    <text evidence="1">Homodimer.</text>
</comment>
<comment type="subcellular location">
    <subcellularLocation>
        <location evidence="1">Cytoplasm</location>
    </subcellularLocation>
</comment>
<comment type="similarity">
    <text evidence="1">Belongs to the triosephosphate isomerase family.</text>
</comment>
<organism>
    <name type="scientific">Yersinia pseudotuberculosis serotype IB (strain PB1/+)</name>
    <dbReference type="NCBI Taxonomy" id="502801"/>
    <lineage>
        <taxon>Bacteria</taxon>
        <taxon>Pseudomonadati</taxon>
        <taxon>Pseudomonadota</taxon>
        <taxon>Gammaproteobacteria</taxon>
        <taxon>Enterobacterales</taxon>
        <taxon>Yersiniaceae</taxon>
        <taxon>Yersinia</taxon>
    </lineage>
</organism>
<proteinExistence type="inferred from homology"/>
<reference key="1">
    <citation type="submission" date="2008-04" db="EMBL/GenBank/DDBJ databases">
        <title>Complete sequence of Yersinia pseudotuberculosis PB1/+.</title>
        <authorList>
            <person name="Copeland A."/>
            <person name="Lucas S."/>
            <person name="Lapidus A."/>
            <person name="Glavina del Rio T."/>
            <person name="Dalin E."/>
            <person name="Tice H."/>
            <person name="Bruce D."/>
            <person name="Goodwin L."/>
            <person name="Pitluck S."/>
            <person name="Munk A.C."/>
            <person name="Brettin T."/>
            <person name="Detter J.C."/>
            <person name="Han C."/>
            <person name="Tapia R."/>
            <person name="Schmutz J."/>
            <person name="Larimer F."/>
            <person name="Land M."/>
            <person name="Hauser L."/>
            <person name="Challacombe J.F."/>
            <person name="Green L."/>
            <person name="Lindler L.E."/>
            <person name="Nikolich M.P."/>
            <person name="Richardson P."/>
        </authorList>
    </citation>
    <scope>NUCLEOTIDE SEQUENCE [LARGE SCALE GENOMIC DNA]</scope>
    <source>
        <strain>PB1/+</strain>
    </source>
</reference>
<evidence type="ECO:0000255" key="1">
    <source>
        <dbReference type="HAMAP-Rule" id="MF_00147"/>
    </source>
</evidence>